<sequence length="37" mass="4460">MKIRASVRKICEKCRLIRRRGRIIVICSNPRHKQRQG</sequence>
<keyword id="KW-0150">Chloroplast</keyword>
<keyword id="KW-0934">Plastid</keyword>
<keyword id="KW-1185">Reference proteome</keyword>
<keyword id="KW-0687">Ribonucleoprotein</keyword>
<keyword id="KW-0689">Ribosomal protein</keyword>
<feature type="chain" id="PRO_0000126310" description="Large ribosomal subunit protein bL36c">
    <location>
        <begin position="1"/>
        <end position="37"/>
    </location>
</feature>
<proteinExistence type="inferred from homology"/>
<evidence type="ECO:0000303" key="1">
    <source>
    </source>
</evidence>
<evidence type="ECO:0000305" key="2"/>
<geneLocation type="chloroplast"/>
<reference key="1">
    <citation type="journal article" date="1999" name="DNA Res.">
        <title>Complete structure of the chloroplast genome of Arabidopsis thaliana.</title>
        <authorList>
            <person name="Sato S."/>
            <person name="Nakamura Y."/>
            <person name="Kaneko T."/>
            <person name="Asamizu E."/>
            <person name="Tabata S."/>
        </authorList>
    </citation>
    <scope>NUCLEOTIDE SEQUENCE [LARGE SCALE GENOMIC DNA]</scope>
    <source>
        <strain>cv. Columbia</strain>
    </source>
</reference>
<reference key="2">
    <citation type="journal article" date="2023" name="Plant Cell">
        <title>An updated nomenclature for plant ribosomal protein genes.</title>
        <authorList>
            <person name="Scarpin M.R."/>
            <person name="Busche M."/>
            <person name="Martinez R.E."/>
            <person name="Harper L.C."/>
            <person name="Reiser L."/>
            <person name="Szakonyi D."/>
            <person name="Merchante C."/>
            <person name="Lan T."/>
            <person name="Xiong W."/>
            <person name="Mo B."/>
            <person name="Tang G."/>
            <person name="Chen X."/>
            <person name="Bailey-Serres J."/>
            <person name="Browning K.S."/>
            <person name="Brunkard J.O."/>
        </authorList>
    </citation>
    <scope>NOMENCLATURE</scope>
</reference>
<dbReference type="EMBL" id="AP000423">
    <property type="protein sequence ID" value="BAA84419.1"/>
    <property type="molecule type" value="Genomic_DNA"/>
</dbReference>
<dbReference type="RefSeq" id="NP_051092.1">
    <property type="nucleotide sequence ID" value="NC_000932.1"/>
</dbReference>
<dbReference type="SMR" id="P62117"/>
<dbReference type="FunCoup" id="P62117">
    <property type="interactions" value="60"/>
</dbReference>
<dbReference type="STRING" id="3702.P62117"/>
<dbReference type="PaxDb" id="3702-ATCG00760.1"/>
<dbReference type="ProteomicsDB" id="236953"/>
<dbReference type="EnsemblPlants" id="ATCG00760.1">
    <property type="protein sequence ID" value="ATCG00760.1"/>
    <property type="gene ID" value="ATCG00760"/>
</dbReference>
<dbReference type="GeneID" id="844725"/>
<dbReference type="Gramene" id="ATCG00760.1">
    <property type="protein sequence ID" value="ATCG00760.1"/>
    <property type="gene ID" value="ATCG00760"/>
</dbReference>
<dbReference type="KEGG" id="ath:ArthCp057"/>
<dbReference type="Araport" id="ATCG00760"/>
<dbReference type="TAIR" id="ATCG00760">
    <property type="gene designation" value="RPL36"/>
</dbReference>
<dbReference type="eggNOG" id="KOG4122">
    <property type="taxonomic scope" value="Eukaryota"/>
</dbReference>
<dbReference type="HOGENOM" id="CLU_135723_6_2_1"/>
<dbReference type="InParanoid" id="P62117"/>
<dbReference type="PRO" id="PR:P62117"/>
<dbReference type="Proteomes" id="UP000006548">
    <property type="component" value="Chloroplast Pltd"/>
</dbReference>
<dbReference type="ExpressionAtlas" id="P62117">
    <property type="expression patterns" value="baseline and differential"/>
</dbReference>
<dbReference type="GO" id="GO:0009507">
    <property type="term" value="C:chloroplast"/>
    <property type="evidence" value="ECO:0007005"/>
    <property type="project" value="TAIR"/>
</dbReference>
<dbReference type="GO" id="GO:0009941">
    <property type="term" value="C:chloroplast envelope"/>
    <property type="evidence" value="ECO:0007005"/>
    <property type="project" value="TAIR"/>
</dbReference>
<dbReference type="GO" id="GO:0009570">
    <property type="term" value="C:chloroplast stroma"/>
    <property type="evidence" value="ECO:0007005"/>
    <property type="project" value="TAIR"/>
</dbReference>
<dbReference type="GO" id="GO:1990904">
    <property type="term" value="C:ribonucleoprotein complex"/>
    <property type="evidence" value="ECO:0007669"/>
    <property type="project" value="UniProtKB-KW"/>
</dbReference>
<dbReference type="GO" id="GO:0005840">
    <property type="term" value="C:ribosome"/>
    <property type="evidence" value="ECO:0007669"/>
    <property type="project" value="UniProtKB-KW"/>
</dbReference>
<dbReference type="GO" id="GO:0003735">
    <property type="term" value="F:structural constituent of ribosome"/>
    <property type="evidence" value="ECO:0007669"/>
    <property type="project" value="InterPro"/>
</dbReference>
<dbReference type="GO" id="GO:0006412">
    <property type="term" value="P:translation"/>
    <property type="evidence" value="ECO:0007669"/>
    <property type="project" value="UniProtKB-UniRule"/>
</dbReference>
<dbReference type="HAMAP" id="MF_00251">
    <property type="entry name" value="Ribosomal_bL36"/>
    <property type="match status" value="1"/>
</dbReference>
<dbReference type="InterPro" id="IPR000473">
    <property type="entry name" value="Ribosomal_bL36"/>
</dbReference>
<dbReference type="InterPro" id="IPR035977">
    <property type="entry name" value="Ribosomal_bL36_sp"/>
</dbReference>
<dbReference type="NCBIfam" id="TIGR01022">
    <property type="entry name" value="rpmJ_bact"/>
    <property type="match status" value="1"/>
</dbReference>
<dbReference type="PANTHER" id="PTHR42888">
    <property type="entry name" value="50S RIBOSOMAL PROTEIN L36, CHLOROPLASTIC"/>
    <property type="match status" value="1"/>
</dbReference>
<dbReference type="PANTHER" id="PTHR42888:SF1">
    <property type="entry name" value="LARGE RIBOSOMAL SUBUNIT PROTEIN BL36C"/>
    <property type="match status" value="1"/>
</dbReference>
<dbReference type="Pfam" id="PF00444">
    <property type="entry name" value="Ribosomal_L36"/>
    <property type="match status" value="1"/>
</dbReference>
<dbReference type="SUPFAM" id="SSF57840">
    <property type="entry name" value="Ribosomal protein L36"/>
    <property type="match status" value="1"/>
</dbReference>
<dbReference type="PROSITE" id="PS00828">
    <property type="entry name" value="RIBOSOMAL_L36"/>
    <property type="match status" value="1"/>
</dbReference>
<accession>P62117</accession>
<accession>P12144</accession>
<protein>
    <recommendedName>
        <fullName evidence="1">Large ribosomal subunit protein bL36c</fullName>
    </recommendedName>
    <alternativeName>
        <fullName>50S ribosomal protein L36, chloroplastic</fullName>
    </alternativeName>
</protein>
<gene>
    <name type="primary">rpl36</name>
    <name type="ordered locus">AtCg00760</name>
</gene>
<comment type="subcellular location">
    <subcellularLocation>
        <location>Plastid</location>
        <location>Chloroplast</location>
    </subcellularLocation>
</comment>
<comment type="similarity">
    <text evidence="2">Belongs to the bacterial ribosomal protein bL36 family.</text>
</comment>
<name>RK36_ARATH</name>
<organism>
    <name type="scientific">Arabidopsis thaliana</name>
    <name type="common">Mouse-ear cress</name>
    <dbReference type="NCBI Taxonomy" id="3702"/>
    <lineage>
        <taxon>Eukaryota</taxon>
        <taxon>Viridiplantae</taxon>
        <taxon>Streptophyta</taxon>
        <taxon>Embryophyta</taxon>
        <taxon>Tracheophyta</taxon>
        <taxon>Spermatophyta</taxon>
        <taxon>Magnoliopsida</taxon>
        <taxon>eudicotyledons</taxon>
        <taxon>Gunneridae</taxon>
        <taxon>Pentapetalae</taxon>
        <taxon>rosids</taxon>
        <taxon>malvids</taxon>
        <taxon>Brassicales</taxon>
        <taxon>Brassicaceae</taxon>
        <taxon>Camelineae</taxon>
        <taxon>Arabidopsis</taxon>
    </lineage>
</organism>